<organism>
    <name type="scientific">Rhizobium johnstonii (strain DSM 114642 / LMG 32736 / 3841)</name>
    <name type="common">Rhizobium leguminosarum bv. viciae</name>
    <dbReference type="NCBI Taxonomy" id="216596"/>
    <lineage>
        <taxon>Bacteria</taxon>
        <taxon>Pseudomonadati</taxon>
        <taxon>Pseudomonadota</taxon>
        <taxon>Alphaproteobacteria</taxon>
        <taxon>Hyphomicrobiales</taxon>
        <taxon>Rhizobiaceae</taxon>
        <taxon>Rhizobium/Agrobacterium group</taxon>
        <taxon>Rhizobium</taxon>
        <taxon>Rhizobium johnstonii</taxon>
    </lineage>
</organism>
<protein>
    <recommendedName>
        <fullName evidence="1">Large ribosomal subunit protein bL32</fullName>
    </recommendedName>
    <alternativeName>
        <fullName evidence="3">50S ribosomal protein L32</fullName>
    </alternativeName>
</protein>
<gene>
    <name evidence="1" type="primary">rpmF</name>
    <name type="ordered locus">RL4624</name>
</gene>
<reference key="1">
    <citation type="journal article" date="2006" name="Genome Biol.">
        <title>The genome of Rhizobium leguminosarum has recognizable core and accessory components.</title>
        <authorList>
            <person name="Young J.P.W."/>
            <person name="Crossman L.C."/>
            <person name="Johnston A.W.B."/>
            <person name="Thomson N.R."/>
            <person name="Ghazoui Z.F."/>
            <person name="Hull K.H."/>
            <person name="Wexler M."/>
            <person name="Curson A.R.J."/>
            <person name="Todd J.D."/>
            <person name="Poole P.S."/>
            <person name="Mauchline T.H."/>
            <person name="East A.K."/>
            <person name="Quail M.A."/>
            <person name="Churcher C."/>
            <person name="Arrowsmith C."/>
            <person name="Cherevach I."/>
            <person name="Chillingworth T."/>
            <person name="Clarke K."/>
            <person name="Cronin A."/>
            <person name="Davis P."/>
            <person name="Fraser A."/>
            <person name="Hance Z."/>
            <person name="Hauser H."/>
            <person name="Jagels K."/>
            <person name="Moule S."/>
            <person name="Mungall K."/>
            <person name="Norbertczak H."/>
            <person name="Rabbinowitsch E."/>
            <person name="Sanders M."/>
            <person name="Simmonds M."/>
            <person name="Whitehead S."/>
            <person name="Parkhill J."/>
        </authorList>
    </citation>
    <scope>NUCLEOTIDE SEQUENCE [LARGE SCALE GENOMIC DNA]</scope>
    <source>
        <strain>DSM 114642 / LMG 32736 / 3841</strain>
    </source>
</reference>
<proteinExistence type="inferred from homology"/>
<evidence type="ECO:0000255" key="1">
    <source>
        <dbReference type="HAMAP-Rule" id="MF_00340"/>
    </source>
</evidence>
<evidence type="ECO:0000256" key="2">
    <source>
        <dbReference type="SAM" id="MobiDB-lite"/>
    </source>
</evidence>
<evidence type="ECO:0000305" key="3"/>
<accession>Q1MAD1</accession>
<name>RL32_RHIJ3</name>
<comment type="similarity">
    <text evidence="1">Belongs to the bacterial ribosomal protein bL32 family.</text>
</comment>
<sequence>MAVPKRKTSPSKRGMRRSADALKAPTYVEDKNSGELRRPHHIDLKTGMYRGRQVLTPKESA</sequence>
<dbReference type="EMBL" id="AM236080">
    <property type="protein sequence ID" value="CAK10107.1"/>
    <property type="molecule type" value="Genomic_DNA"/>
</dbReference>
<dbReference type="RefSeq" id="WP_003543812.1">
    <property type="nucleotide sequence ID" value="NC_008380.1"/>
</dbReference>
<dbReference type="SMR" id="Q1MAD1"/>
<dbReference type="EnsemblBacteria" id="CAK10107">
    <property type="protein sequence ID" value="CAK10107"/>
    <property type="gene ID" value="RL4624"/>
</dbReference>
<dbReference type="GeneID" id="91150674"/>
<dbReference type="KEGG" id="rle:RL4624"/>
<dbReference type="eggNOG" id="COG0333">
    <property type="taxonomic scope" value="Bacteria"/>
</dbReference>
<dbReference type="HOGENOM" id="CLU_129084_2_2_5"/>
<dbReference type="Proteomes" id="UP000006575">
    <property type="component" value="Chromosome"/>
</dbReference>
<dbReference type="GO" id="GO:0015934">
    <property type="term" value="C:large ribosomal subunit"/>
    <property type="evidence" value="ECO:0007669"/>
    <property type="project" value="InterPro"/>
</dbReference>
<dbReference type="GO" id="GO:0003735">
    <property type="term" value="F:structural constituent of ribosome"/>
    <property type="evidence" value="ECO:0007669"/>
    <property type="project" value="InterPro"/>
</dbReference>
<dbReference type="GO" id="GO:0006412">
    <property type="term" value="P:translation"/>
    <property type="evidence" value="ECO:0007669"/>
    <property type="project" value="UniProtKB-UniRule"/>
</dbReference>
<dbReference type="Gene3D" id="1.20.5.640">
    <property type="entry name" value="Single helix bin"/>
    <property type="match status" value="1"/>
</dbReference>
<dbReference type="HAMAP" id="MF_00340">
    <property type="entry name" value="Ribosomal_bL32"/>
    <property type="match status" value="1"/>
</dbReference>
<dbReference type="InterPro" id="IPR002677">
    <property type="entry name" value="Ribosomal_bL32"/>
</dbReference>
<dbReference type="InterPro" id="IPR044957">
    <property type="entry name" value="Ribosomal_bL32_bact"/>
</dbReference>
<dbReference type="InterPro" id="IPR011332">
    <property type="entry name" value="Ribosomal_zn-bd"/>
</dbReference>
<dbReference type="NCBIfam" id="TIGR01031">
    <property type="entry name" value="rpmF_bact"/>
    <property type="match status" value="1"/>
</dbReference>
<dbReference type="PANTHER" id="PTHR35534">
    <property type="entry name" value="50S RIBOSOMAL PROTEIN L32"/>
    <property type="match status" value="1"/>
</dbReference>
<dbReference type="PANTHER" id="PTHR35534:SF1">
    <property type="entry name" value="LARGE RIBOSOMAL SUBUNIT PROTEIN BL32"/>
    <property type="match status" value="1"/>
</dbReference>
<dbReference type="Pfam" id="PF01783">
    <property type="entry name" value="Ribosomal_L32p"/>
    <property type="match status" value="1"/>
</dbReference>
<dbReference type="SUPFAM" id="SSF57829">
    <property type="entry name" value="Zn-binding ribosomal proteins"/>
    <property type="match status" value="1"/>
</dbReference>
<feature type="chain" id="PRO_0000296542" description="Large ribosomal subunit protein bL32">
    <location>
        <begin position="1"/>
        <end position="61"/>
    </location>
</feature>
<feature type="region of interest" description="Disordered" evidence="2">
    <location>
        <begin position="1"/>
        <end position="61"/>
    </location>
</feature>
<feature type="compositionally biased region" description="Basic residues" evidence="2">
    <location>
        <begin position="1"/>
        <end position="16"/>
    </location>
</feature>
<feature type="compositionally biased region" description="Basic and acidic residues" evidence="2">
    <location>
        <begin position="28"/>
        <end position="44"/>
    </location>
</feature>
<keyword id="KW-0687">Ribonucleoprotein</keyword>
<keyword id="KW-0689">Ribosomal protein</keyword>